<keyword id="KW-1185">Reference proteome</keyword>
<keyword id="KW-0687">Ribonucleoprotein</keyword>
<keyword id="KW-0689">Ribosomal protein</keyword>
<keyword id="KW-0694">RNA-binding</keyword>
<keyword id="KW-0699">rRNA-binding</keyword>
<keyword id="KW-0820">tRNA-binding</keyword>
<evidence type="ECO:0000250" key="1"/>
<evidence type="ECO:0000255" key="2">
    <source>
        <dbReference type="HAMAP-Rule" id="MF_00480"/>
    </source>
</evidence>
<evidence type="ECO:0000305" key="3"/>
<proteinExistence type="inferred from homology"/>
<feature type="initiator methionine" description="Removed" evidence="1">
    <location>
        <position position="1"/>
    </location>
</feature>
<feature type="chain" id="PRO_0000124271" description="Small ribosomal subunit protein uS7">
    <location>
        <begin position="2"/>
        <end position="156"/>
    </location>
</feature>
<name>RS7_HAEIN</name>
<organism>
    <name type="scientific">Haemophilus influenzae (strain ATCC 51907 / DSM 11121 / KW20 / Rd)</name>
    <dbReference type="NCBI Taxonomy" id="71421"/>
    <lineage>
        <taxon>Bacteria</taxon>
        <taxon>Pseudomonadati</taxon>
        <taxon>Pseudomonadota</taxon>
        <taxon>Gammaproteobacteria</taxon>
        <taxon>Pasteurellales</taxon>
        <taxon>Pasteurellaceae</taxon>
        <taxon>Haemophilus</taxon>
    </lineage>
</organism>
<dbReference type="EMBL" id="L42023">
    <property type="protein sequence ID" value="AAC22238.1"/>
    <property type="molecule type" value="Genomic_DNA"/>
</dbReference>
<dbReference type="PIR" id="G64078">
    <property type="entry name" value="G64078"/>
</dbReference>
<dbReference type="RefSeq" id="NP_438738.1">
    <property type="nucleotide sequence ID" value="NC_000907.1"/>
</dbReference>
<dbReference type="SMR" id="P44376"/>
<dbReference type="STRING" id="71421.HI_0580"/>
<dbReference type="EnsemblBacteria" id="AAC22238">
    <property type="protein sequence ID" value="AAC22238"/>
    <property type="gene ID" value="HI_0580"/>
</dbReference>
<dbReference type="KEGG" id="hin:HI_0580"/>
<dbReference type="PATRIC" id="fig|71421.8.peg.601"/>
<dbReference type="eggNOG" id="COG0049">
    <property type="taxonomic scope" value="Bacteria"/>
</dbReference>
<dbReference type="HOGENOM" id="CLU_072226_1_1_6"/>
<dbReference type="OrthoDB" id="9807653at2"/>
<dbReference type="PhylomeDB" id="P44376"/>
<dbReference type="BioCyc" id="HINF71421:G1GJ1-593-MONOMER"/>
<dbReference type="Proteomes" id="UP000000579">
    <property type="component" value="Chromosome"/>
</dbReference>
<dbReference type="GO" id="GO:0022627">
    <property type="term" value="C:cytosolic small ribosomal subunit"/>
    <property type="evidence" value="ECO:0000318"/>
    <property type="project" value="GO_Central"/>
</dbReference>
<dbReference type="GO" id="GO:0005840">
    <property type="term" value="C:ribosome"/>
    <property type="evidence" value="ECO:0000318"/>
    <property type="project" value="GO_Central"/>
</dbReference>
<dbReference type="GO" id="GO:0003729">
    <property type="term" value="F:mRNA binding"/>
    <property type="evidence" value="ECO:0000318"/>
    <property type="project" value="GO_Central"/>
</dbReference>
<dbReference type="GO" id="GO:0019843">
    <property type="term" value="F:rRNA binding"/>
    <property type="evidence" value="ECO:0000318"/>
    <property type="project" value="GO_Central"/>
</dbReference>
<dbReference type="GO" id="GO:0003735">
    <property type="term" value="F:structural constituent of ribosome"/>
    <property type="evidence" value="ECO:0000318"/>
    <property type="project" value="GO_Central"/>
</dbReference>
<dbReference type="GO" id="GO:0000049">
    <property type="term" value="F:tRNA binding"/>
    <property type="evidence" value="ECO:0007669"/>
    <property type="project" value="UniProtKB-UniRule"/>
</dbReference>
<dbReference type="GO" id="GO:0000028">
    <property type="term" value="P:ribosomal small subunit assembly"/>
    <property type="evidence" value="ECO:0000318"/>
    <property type="project" value="GO_Central"/>
</dbReference>
<dbReference type="GO" id="GO:0006412">
    <property type="term" value="P:translation"/>
    <property type="evidence" value="ECO:0000318"/>
    <property type="project" value="GO_Central"/>
</dbReference>
<dbReference type="CDD" id="cd14869">
    <property type="entry name" value="uS7_Bacteria"/>
    <property type="match status" value="1"/>
</dbReference>
<dbReference type="FunFam" id="1.10.455.10:FF:000001">
    <property type="entry name" value="30S ribosomal protein S7"/>
    <property type="match status" value="1"/>
</dbReference>
<dbReference type="Gene3D" id="1.10.455.10">
    <property type="entry name" value="Ribosomal protein S7 domain"/>
    <property type="match status" value="1"/>
</dbReference>
<dbReference type="HAMAP" id="MF_00480_B">
    <property type="entry name" value="Ribosomal_uS7_B"/>
    <property type="match status" value="1"/>
</dbReference>
<dbReference type="InterPro" id="IPR000235">
    <property type="entry name" value="Ribosomal_uS7"/>
</dbReference>
<dbReference type="InterPro" id="IPR005717">
    <property type="entry name" value="Ribosomal_uS7_bac/org-type"/>
</dbReference>
<dbReference type="InterPro" id="IPR020606">
    <property type="entry name" value="Ribosomal_uS7_CS"/>
</dbReference>
<dbReference type="InterPro" id="IPR023798">
    <property type="entry name" value="Ribosomal_uS7_dom"/>
</dbReference>
<dbReference type="InterPro" id="IPR036823">
    <property type="entry name" value="Ribosomal_uS7_dom_sf"/>
</dbReference>
<dbReference type="NCBIfam" id="TIGR01029">
    <property type="entry name" value="rpsG_bact"/>
    <property type="match status" value="1"/>
</dbReference>
<dbReference type="PANTHER" id="PTHR11205">
    <property type="entry name" value="RIBOSOMAL PROTEIN S7"/>
    <property type="match status" value="1"/>
</dbReference>
<dbReference type="Pfam" id="PF00177">
    <property type="entry name" value="Ribosomal_S7"/>
    <property type="match status" value="1"/>
</dbReference>
<dbReference type="PIRSF" id="PIRSF002122">
    <property type="entry name" value="RPS7p_RPS7a_RPS5e_RPS7o"/>
    <property type="match status" value="1"/>
</dbReference>
<dbReference type="SUPFAM" id="SSF47973">
    <property type="entry name" value="Ribosomal protein S7"/>
    <property type="match status" value="1"/>
</dbReference>
<dbReference type="PROSITE" id="PS00052">
    <property type="entry name" value="RIBOSOMAL_S7"/>
    <property type="match status" value="1"/>
</dbReference>
<gene>
    <name evidence="2" type="primary">rpsG</name>
    <name evidence="2" type="synonym">rps7</name>
    <name type="ordered locus">HI_0580</name>
</gene>
<accession>P44376</accession>
<reference key="1">
    <citation type="journal article" date="1995" name="Science">
        <title>Whole-genome random sequencing and assembly of Haemophilus influenzae Rd.</title>
        <authorList>
            <person name="Fleischmann R.D."/>
            <person name="Adams M.D."/>
            <person name="White O."/>
            <person name="Clayton R.A."/>
            <person name="Kirkness E.F."/>
            <person name="Kerlavage A.R."/>
            <person name="Bult C.J."/>
            <person name="Tomb J.-F."/>
            <person name="Dougherty B.A."/>
            <person name="Merrick J.M."/>
            <person name="McKenney K."/>
            <person name="Sutton G.G."/>
            <person name="FitzHugh W."/>
            <person name="Fields C.A."/>
            <person name="Gocayne J.D."/>
            <person name="Scott J.D."/>
            <person name="Shirley R."/>
            <person name="Liu L.-I."/>
            <person name="Glodek A."/>
            <person name="Kelley J.M."/>
            <person name="Weidman J.F."/>
            <person name="Phillips C.A."/>
            <person name="Spriggs T."/>
            <person name="Hedblom E."/>
            <person name="Cotton M.D."/>
            <person name="Utterback T.R."/>
            <person name="Hanna M.C."/>
            <person name="Nguyen D.T."/>
            <person name="Saudek D.M."/>
            <person name="Brandon R.C."/>
            <person name="Fine L.D."/>
            <person name="Fritchman J.L."/>
            <person name="Fuhrmann J.L."/>
            <person name="Geoghagen N.S.M."/>
            <person name="Gnehm C.L."/>
            <person name="McDonald L.A."/>
            <person name="Small K.V."/>
            <person name="Fraser C.M."/>
            <person name="Smith H.O."/>
            <person name="Venter J.C."/>
        </authorList>
    </citation>
    <scope>NUCLEOTIDE SEQUENCE [LARGE SCALE GENOMIC DNA]</scope>
    <source>
        <strain>ATCC 51907 / DSM 11121 / KW20 / Rd</strain>
    </source>
</reference>
<protein>
    <recommendedName>
        <fullName evidence="2">Small ribosomal subunit protein uS7</fullName>
    </recommendedName>
    <alternativeName>
        <fullName evidence="3">30S ribosomal protein S7</fullName>
    </alternativeName>
</protein>
<comment type="function">
    <text evidence="2">One of the primary rRNA binding proteins, it binds directly to 16S rRNA where it nucleates assembly of the head domain of the 30S subunit. Is located at the subunit interface close to the decoding center, probably blocks exit of the E-site tRNA.</text>
</comment>
<comment type="subunit">
    <text evidence="2">Part of the 30S ribosomal subunit. Contacts proteins S9 and S11.</text>
</comment>
<comment type="similarity">
    <text evidence="2">Belongs to the universal ribosomal protein uS7 family.</text>
</comment>
<sequence>MPRRRSVEARKILPDPKFGSELLAKFINVIMVDGKKSVAESIVYGALETLAQRTGKEPLEAFEVALENVRPTVEVKSRRVGGSTYQVPVEVRPVRRNALGMRWIVEAARKRGDKSMALRLANELSDASDNKGAAVKKREDVHRMAEANKAFAHYRW</sequence>